<reference key="1">
    <citation type="journal article" date="2007" name="BMC Plant Biol.">
        <title>Complete DNA sequences of the plastid genomes of two parasitic flowering plant species, Cuscuta reflexa and Cuscuta gronovii.</title>
        <authorList>
            <person name="Funk H.T."/>
            <person name="Berg S."/>
            <person name="Krupinska K."/>
            <person name="Maier U.-G."/>
            <person name="Krause K."/>
        </authorList>
    </citation>
    <scope>NUCLEOTIDE SEQUENCE [LARGE SCALE GENOMIC DNA]</scope>
    <scope>ABSENCE OF RNA EDITING</scope>
</reference>
<accession>A7M8Z0</accession>
<name>ATPF_CUSGR</name>
<gene>
    <name evidence="1" type="primary">atpF</name>
</gene>
<keyword id="KW-0066">ATP synthesis</keyword>
<keyword id="KW-0067">ATP-binding</keyword>
<keyword id="KW-0138">CF(0)</keyword>
<keyword id="KW-0375">Hydrogen ion transport</keyword>
<keyword id="KW-0406">Ion transport</keyword>
<keyword id="KW-0472">Membrane</keyword>
<keyword id="KW-0547">Nucleotide-binding</keyword>
<keyword id="KW-0934">Plastid</keyword>
<keyword id="KW-0812">Transmembrane</keyword>
<keyword id="KW-1133">Transmembrane helix</keyword>
<keyword id="KW-0813">Transport</keyword>
<feature type="chain" id="PRO_0000308478" description="ATP synthase subunit b, plastid">
    <location>
        <begin position="1"/>
        <end position="180"/>
    </location>
</feature>
<feature type="transmembrane region" description="Helical" evidence="1">
    <location>
        <begin position="27"/>
        <end position="49"/>
    </location>
</feature>
<organism>
    <name type="scientific">Cuscuta gronovii</name>
    <name type="common">Common dodder</name>
    <name type="synonym">Epithymum gronovii</name>
    <dbReference type="NCBI Taxonomy" id="35886"/>
    <lineage>
        <taxon>Eukaryota</taxon>
        <taxon>Viridiplantae</taxon>
        <taxon>Streptophyta</taxon>
        <taxon>Embryophyta</taxon>
        <taxon>Tracheophyta</taxon>
        <taxon>Spermatophyta</taxon>
        <taxon>Magnoliopsida</taxon>
        <taxon>eudicotyledons</taxon>
        <taxon>Gunneridae</taxon>
        <taxon>Pentapetalae</taxon>
        <taxon>asterids</taxon>
        <taxon>lamiids</taxon>
        <taxon>Solanales</taxon>
        <taxon>Convolvulaceae</taxon>
        <taxon>Cuscuteae</taxon>
        <taxon>Cuscuta</taxon>
        <taxon>Cuscuta subgen. Grammica</taxon>
        <taxon>Cuscuta sect. Oxycarpae</taxon>
    </lineage>
</organism>
<proteinExistence type="evidence at transcript level"/>
<comment type="function">
    <text evidence="1">F(1)F(0) ATP synthase produces ATP from ADP in the presence of a proton or sodium gradient. F-type ATPases consist of two structural domains, F(1) containing the extramembraneous catalytic core and F(0) containing the membrane proton channel, linked together by a central stalk and a peripheral stalk. During catalysis, ATP synthesis in the catalytic domain of F(1) is coupled via a rotary mechanism of the central stalk subunits to proton translocation.</text>
</comment>
<comment type="function">
    <text evidence="1">Component of the F(0) channel, it forms part of the peripheral stalk, linking F(1) to F(0).</text>
</comment>
<comment type="subunit">
    <text evidence="1">F-type ATPases have 2 components, F(1) - the catalytic core - and F(0) - the membrane proton channel. F(1) has five subunits: alpha(3), beta(3), gamma(1), delta(1), epsilon(1). F(0) has four main subunits: a(1), b(1), b'(1) and c(10-14). The alpha and beta chains form an alternating ring which encloses part of the gamma chain. F(1) is attached to F(0) by a central stalk formed by the gamma and epsilon chains, while a peripheral stalk is formed by the delta, b and b' chains.</text>
</comment>
<comment type="subcellular location">
    <subcellularLocation>
        <location evidence="2">Plastid membrane</location>
        <topology evidence="1">Single-pass membrane protein</topology>
    </subcellularLocation>
</comment>
<comment type="similarity">
    <text evidence="1">Belongs to the ATPase B chain family.</text>
</comment>
<comment type="caution">
    <text evidence="2">Young tissue from this organism is photosynthetic and contains some thylakoids, although the photosynthetic activity does not exceed the light compensation point.</text>
</comment>
<dbReference type="EMBL" id="AM711639">
    <property type="protein sequence ID" value="CAM98318.1"/>
    <property type="molecule type" value="Genomic_DNA"/>
</dbReference>
<dbReference type="RefSeq" id="YP_001430032.1">
    <property type="nucleotide sequence ID" value="NC_009765.1"/>
</dbReference>
<dbReference type="SMR" id="A7M8Z0"/>
<dbReference type="GeneID" id="5536797"/>
<dbReference type="GO" id="GO:0042170">
    <property type="term" value="C:plastid membrane"/>
    <property type="evidence" value="ECO:0007669"/>
    <property type="project" value="UniProtKB-SubCell"/>
</dbReference>
<dbReference type="GO" id="GO:0045259">
    <property type="term" value="C:proton-transporting ATP synthase complex"/>
    <property type="evidence" value="ECO:0007669"/>
    <property type="project" value="UniProtKB-KW"/>
</dbReference>
<dbReference type="GO" id="GO:0005524">
    <property type="term" value="F:ATP binding"/>
    <property type="evidence" value="ECO:0007669"/>
    <property type="project" value="UniProtKB-KW"/>
</dbReference>
<dbReference type="GO" id="GO:0015078">
    <property type="term" value="F:proton transmembrane transporter activity"/>
    <property type="evidence" value="ECO:0007669"/>
    <property type="project" value="InterPro"/>
</dbReference>
<dbReference type="GO" id="GO:0015986">
    <property type="term" value="P:proton motive force-driven ATP synthesis"/>
    <property type="evidence" value="ECO:0007669"/>
    <property type="project" value="InterPro"/>
</dbReference>
<dbReference type="CDD" id="cd06503">
    <property type="entry name" value="ATP-synt_Fo_b"/>
    <property type="match status" value="1"/>
</dbReference>
<dbReference type="HAMAP" id="MF_01398">
    <property type="entry name" value="ATP_synth_b_bprime"/>
    <property type="match status" value="1"/>
</dbReference>
<dbReference type="InterPro" id="IPR002146">
    <property type="entry name" value="ATP_synth_b/b'su_bac/chlpt"/>
</dbReference>
<dbReference type="PANTHER" id="PTHR34264">
    <property type="entry name" value="ATP SYNTHASE SUBUNIT B, CHLOROPLASTIC"/>
    <property type="match status" value="1"/>
</dbReference>
<dbReference type="PANTHER" id="PTHR34264:SF3">
    <property type="entry name" value="ATP SYNTHASE SUBUNIT B, CHLOROPLASTIC"/>
    <property type="match status" value="1"/>
</dbReference>
<dbReference type="Pfam" id="PF00430">
    <property type="entry name" value="ATP-synt_B"/>
    <property type="match status" value="1"/>
</dbReference>
<sequence length="180" mass="20526">MKDVTYYLISLASQSPAGSFGLNTNNLVTTLINIAVVLSLLIVFGKGFLRDFLDTRKNRIVNTIQISDELYSGAVEKLEKAQARLCKVEKEAKQLRVTGYSEIEQEKLNLINSTYKTLERLEKKKKETCSFEQQRAINDVRQWVLQQTLQRVLKTLNGSLNPELHLHTIRVNISMLGTLK</sequence>
<evidence type="ECO:0000255" key="1">
    <source>
        <dbReference type="HAMAP-Rule" id="MF_01398"/>
    </source>
</evidence>
<evidence type="ECO:0000305" key="2"/>
<geneLocation type="plastid"/>
<protein>
    <recommendedName>
        <fullName evidence="1">ATP synthase subunit b, plastid</fullName>
    </recommendedName>
    <alternativeName>
        <fullName evidence="1">ATP synthase F(0) sector subunit b</fullName>
    </alternativeName>
    <alternativeName>
        <fullName evidence="1">ATPase subunit I</fullName>
    </alternativeName>
</protein>